<protein>
    <recommendedName>
        <fullName>Palmitoyl-protein thioesterase 3</fullName>
        <shortName>PPT-3</shortName>
        <ecNumber>3.1.2.22</ecNumber>
    </recommendedName>
    <alternativeName>
        <fullName>Palmitoyl-protein hydrolase 3</fullName>
    </alternativeName>
</protein>
<evidence type="ECO:0000250" key="1"/>
<evidence type="ECO:0000255" key="2"/>
<evidence type="ECO:0000305" key="3"/>
<dbReference type="EC" id="3.1.2.22"/>
<dbReference type="EMBL" id="AAFI02000197">
    <property type="protein sequence ID" value="EAL60980.1"/>
    <property type="molecule type" value="Genomic_DNA"/>
</dbReference>
<dbReference type="RefSeq" id="XP_629396.1">
    <property type="nucleotide sequence ID" value="XM_629394.1"/>
</dbReference>
<dbReference type="SMR" id="Q54CM0"/>
<dbReference type="FunCoup" id="Q54CM0">
    <property type="interactions" value="27"/>
</dbReference>
<dbReference type="STRING" id="44689.Q54CM0"/>
<dbReference type="ESTHER" id="dicdi-q54cm0">
    <property type="family name" value="Palmitoyl-protein_thioesterase"/>
</dbReference>
<dbReference type="GlyCosmos" id="Q54CM0">
    <property type="glycosylation" value="3 sites, No reported glycans"/>
</dbReference>
<dbReference type="GlyGen" id="Q54CM0">
    <property type="glycosylation" value="3 sites"/>
</dbReference>
<dbReference type="PaxDb" id="44689-DDB0233893"/>
<dbReference type="EnsemblProtists" id="EAL60980">
    <property type="protein sequence ID" value="EAL60980"/>
    <property type="gene ID" value="DDB_G0292862"/>
</dbReference>
<dbReference type="GeneID" id="8628914"/>
<dbReference type="KEGG" id="ddi:DDB_G0292862"/>
<dbReference type="dictyBase" id="DDB_G0292862">
    <property type="gene designation" value="ppt3"/>
</dbReference>
<dbReference type="VEuPathDB" id="AmoebaDB:DDB_G0292862"/>
<dbReference type="eggNOG" id="KOG2541">
    <property type="taxonomic scope" value="Eukaryota"/>
</dbReference>
<dbReference type="HOGENOM" id="CLU_050129_0_0_1"/>
<dbReference type="InParanoid" id="Q54CM0"/>
<dbReference type="OMA" id="AWHTRRD"/>
<dbReference type="PhylomeDB" id="Q54CM0"/>
<dbReference type="PRO" id="PR:Q54CM0"/>
<dbReference type="Proteomes" id="UP000002195">
    <property type="component" value="Chromosome 6"/>
</dbReference>
<dbReference type="GO" id="GO:0005764">
    <property type="term" value="C:lysosome"/>
    <property type="evidence" value="ECO:0007669"/>
    <property type="project" value="UniProtKB-SubCell"/>
</dbReference>
<dbReference type="GO" id="GO:0008474">
    <property type="term" value="F:palmitoyl-(protein) hydrolase activity"/>
    <property type="evidence" value="ECO:0007669"/>
    <property type="project" value="UniProtKB-EC"/>
</dbReference>
<dbReference type="FunFam" id="3.40.50.1820:FF:000107">
    <property type="entry name" value="Palmitoyl-protein thioesterase 1"/>
    <property type="match status" value="1"/>
</dbReference>
<dbReference type="Gene3D" id="3.40.50.1820">
    <property type="entry name" value="alpha/beta hydrolase"/>
    <property type="match status" value="1"/>
</dbReference>
<dbReference type="InterPro" id="IPR029058">
    <property type="entry name" value="AB_hydrolase_fold"/>
</dbReference>
<dbReference type="PANTHER" id="PTHR11247:SF67">
    <property type="entry name" value="PALMITOYL-PROTEIN THIOESTERASE 3"/>
    <property type="match status" value="1"/>
</dbReference>
<dbReference type="PANTHER" id="PTHR11247">
    <property type="entry name" value="PALMITOYL-PROTEIN THIOESTERASE/DOLICHYLDIPHOSPHATASE 1"/>
    <property type="match status" value="1"/>
</dbReference>
<dbReference type="Pfam" id="PF02089">
    <property type="entry name" value="Palm_thioest"/>
    <property type="match status" value="1"/>
</dbReference>
<dbReference type="SUPFAM" id="SSF53474">
    <property type="entry name" value="alpha/beta-Hydrolases"/>
    <property type="match status" value="1"/>
</dbReference>
<gene>
    <name type="primary">ppt3</name>
    <name type="ORF">DDB_G0292862</name>
</gene>
<reference key="1">
    <citation type="journal article" date="2005" name="Nature">
        <title>The genome of the social amoeba Dictyostelium discoideum.</title>
        <authorList>
            <person name="Eichinger L."/>
            <person name="Pachebat J.A."/>
            <person name="Gloeckner G."/>
            <person name="Rajandream M.A."/>
            <person name="Sucgang R."/>
            <person name="Berriman M."/>
            <person name="Song J."/>
            <person name="Olsen R."/>
            <person name="Szafranski K."/>
            <person name="Xu Q."/>
            <person name="Tunggal B."/>
            <person name="Kummerfeld S."/>
            <person name="Madera M."/>
            <person name="Konfortov B.A."/>
            <person name="Rivero F."/>
            <person name="Bankier A.T."/>
            <person name="Lehmann R."/>
            <person name="Hamlin N."/>
            <person name="Davies R."/>
            <person name="Gaudet P."/>
            <person name="Fey P."/>
            <person name="Pilcher K."/>
            <person name="Chen G."/>
            <person name="Saunders D."/>
            <person name="Sodergren E.J."/>
            <person name="Davis P."/>
            <person name="Kerhornou A."/>
            <person name="Nie X."/>
            <person name="Hall N."/>
            <person name="Anjard C."/>
            <person name="Hemphill L."/>
            <person name="Bason N."/>
            <person name="Farbrother P."/>
            <person name="Desany B."/>
            <person name="Just E."/>
            <person name="Morio T."/>
            <person name="Rost R."/>
            <person name="Churcher C.M."/>
            <person name="Cooper J."/>
            <person name="Haydock S."/>
            <person name="van Driessche N."/>
            <person name="Cronin A."/>
            <person name="Goodhead I."/>
            <person name="Muzny D.M."/>
            <person name="Mourier T."/>
            <person name="Pain A."/>
            <person name="Lu M."/>
            <person name="Harper D."/>
            <person name="Lindsay R."/>
            <person name="Hauser H."/>
            <person name="James K.D."/>
            <person name="Quiles M."/>
            <person name="Madan Babu M."/>
            <person name="Saito T."/>
            <person name="Buchrieser C."/>
            <person name="Wardroper A."/>
            <person name="Felder M."/>
            <person name="Thangavelu M."/>
            <person name="Johnson D."/>
            <person name="Knights A."/>
            <person name="Loulseged H."/>
            <person name="Mungall K.L."/>
            <person name="Oliver K."/>
            <person name="Price C."/>
            <person name="Quail M.A."/>
            <person name="Urushihara H."/>
            <person name="Hernandez J."/>
            <person name="Rabbinowitsch E."/>
            <person name="Steffen D."/>
            <person name="Sanders M."/>
            <person name="Ma J."/>
            <person name="Kohara Y."/>
            <person name="Sharp S."/>
            <person name="Simmonds M.N."/>
            <person name="Spiegler S."/>
            <person name="Tivey A."/>
            <person name="Sugano S."/>
            <person name="White B."/>
            <person name="Walker D."/>
            <person name="Woodward J.R."/>
            <person name="Winckler T."/>
            <person name="Tanaka Y."/>
            <person name="Shaulsky G."/>
            <person name="Schleicher M."/>
            <person name="Weinstock G.M."/>
            <person name="Rosenthal A."/>
            <person name="Cox E.C."/>
            <person name="Chisholm R.L."/>
            <person name="Gibbs R.A."/>
            <person name="Loomis W.F."/>
            <person name="Platzer M."/>
            <person name="Kay R.R."/>
            <person name="Williams J.G."/>
            <person name="Dear P.H."/>
            <person name="Noegel A.A."/>
            <person name="Barrell B.G."/>
            <person name="Kuspa A."/>
        </authorList>
    </citation>
    <scope>NUCLEOTIDE SEQUENCE [LARGE SCALE GENOMIC DNA]</scope>
    <source>
        <strain>AX4</strain>
    </source>
</reference>
<name>PPT3_DICDI</name>
<sequence length="289" mass="33050">MRILSSLILLIALAIALVSATRPVVLMHGVTTGKESMEPLKSWIEESIPDIYVLNVEIGNGAFDSIFTTMDSQIEEFAQVVQADPKLANGFNLIGFSQGTLIARAFVQRYNNPQVYNYISWNGPQGGQFGTPFVNIPWVDKVLGTIPYEKTIQKKLSVAEYWKDPHRIDKYLERSIFLADINNEYQVKNTTYKENLTKLNAMVLTYSTNDKTIIPKESGWFSFYADGSGTEVVPLQQQTQYSEDWLGLRTLDESNRLFFYTTTCTHRDHPIEDYCKPYFTNFTLPYLQN</sequence>
<feature type="signal peptide" evidence="2">
    <location>
        <begin position="1"/>
        <end position="20"/>
    </location>
</feature>
<feature type="chain" id="PRO_0000328588" description="Palmitoyl-protein thioesterase 3">
    <location>
        <begin position="21"/>
        <end position="289"/>
    </location>
</feature>
<feature type="active site" evidence="1">
    <location>
        <position position="97"/>
    </location>
</feature>
<feature type="active site" evidence="1">
    <location>
        <position position="210"/>
    </location>
</feature>
<feature type="active site" evidence="1">
    <location>
        <position position="266"/>
    </location>
</feature>
<feature type="glycosylation site" description="N-linked (GlcNAc...) asparagine" evidence="2">
    <location>
        <position position="189"/>
    </location>
</feature>
<feature type="glycosylation site" description="N-linked (GlcNAc...) asparagine" evidence="2">
    <location>
        <position position="195"/>
    </location>
</feature>
<feature type="glycosylation site" description="N-linked (GlcNAc...) asparagine" evidence="2">
    <location>
        <position position="281"/>
    </location>
</feature>
<proteinExistence type="inferred from homology"/>
<organism>
    <name type="scientific">Dictyostelium discoideum</name>
    <name type="common">Social amoeba</name>
    <dbReference type="NCBI Taxonomy" id="44689"/>
    <lineage>
        <taxon>Eukaryota</taxon>
        <taxon>Amoebozoa</taxon>
        <taxon>Evosea</taxon>
        <taxon>Eumycetozoa</taxon>
        <taxon>Dictyostelia</taxon>
        <taxon>Dictyosteliales</taxon>
        <taxon>Dictyosteliaceae</taxon>
        <taxon>Dictyostelium</taxon>
    </lineage>
</organism>
<accession>Q54CM0</accession>
<comment type="function">
    <text evidence="1">Removes thioester-linked fatty acyl groups such as palmitate from modified cysteine residues in proteins or peptides during lysosomal degradation.</text>
</comment>
<comment type="catalytic activity">
    <reaction>
        <text>S-hexadecanoyl-L-cysteinyl-[protein] + H2O = L-cysteinyl-[protein] + hexadecanoate + H(+)</text>
        <dbReference type="Rhea" id="RHEA:19233"/>
        <dbReference type="Rhea" id="RHEA-COMP:10131"/>
        <dbReference type="Rhea" id="RHEA-COMP:11032"/>
        <dbReference type="ChEBI" id="CHEBI:7896"/>
        <dbReference type="ChEBI" id="CHEBI:15377"/>
        <dbReference type="ChEBI" id="CHEBI:15378"/>
        <dbReference type="ChEBI" id="CHEBI:29950"/>
        <dbReference type="ChEBI" id="CHEBI:74151"/>
        <dbReference type="EC" id="3.1.2.22"/>
    </reaction>
</comment>
<comment type="subcellular location">
    <subcellularLocation>
        <location evidence="1">Lysosome</location>
    </subcellularLocation>
</comment>
<comment type="similarity">
    <text evidence="3">Belongs to the palmitoyl-protein thioesterase family.</text>
</comment>
<keyword id="KW-0325">Glycoprotein</keyword>
<keyword id="KW-0378">Hydrolase</keyword>
<keyword id="KW-0458">Lysosome</keyword>
<keyword id="KW-1185">Reference proteome</keyword>
<keyword id="KW-0732">Signal</keyword>